<sequence>AITCGQVSSALSSCLGYLKNGGAVPPGSSCGIKNLNSA</sequence>
<comment type="function">
    <text>Plant non-specific lipid-transfer proteins transfer phospholipids as well as galactolipids across membranes. May play a role in wax or cutin deposition in the cell walls of expanding epidermal cells and certain secretory tissues.</text>
</comment>
<comment type="subcellular location">
    <subcellularLocation>
        <location>Secreted</location>
    </subcellularLocation>
</comment>
<comment type="similarity">
    <text evidence="1">Belongs to the plant LTP family.</text>
</comment>
<evidence type="ECO:0000305" key="1"/>
<proteinExistence type="evidence at protein level"/>
<protein>
    <recommendedName>
        <fullName>Non-specific lipid-transfer protein P2</fullName>
        <shortName>LTP P2</shortName>
    </recommendedName>
</protein>
<organism>
    <name type="scientific">Vitis sp.</name>
    <name type="common">Grape</name>
    <dbReference type="NCBI Taxonomy" id="3604"/>
    <lineage>
        <taxon>Eukaryota</taxon>
        <taxon>Viridiplantae</taxon>
        <taxon>Streptophyta</taxon>
        <taxon>Embryophyta</taxon>
        <taxon>Tracheophyta</taxon>
        <taxon>Spermatophyta</taxon>
        <taxon>Magnoliopsida</taxon>
        <taxon>eudicotyledons</taxon>
        <taxon>Gunneridae</taxon>
        <taxon>Pentapetalae</taxon>
        <taxon>rosids</taxon>
        <taxon>Vitales</taxon>
        <taxon>Vitaceae</taxon>
        <taxon>Viteae</taxon>
        <taxon>Vitis</taxon>
    </lineage>
</organism>
<feature type="chain" id="PRO_0000153885" description="Non-specific lipid-transfer protein P2">
    <location>
        <begin position="1"/>
        <end position="38" status="greater than"/>
    </location>
</feature>
<feature type="non-terminal residue">
    <location>
        <position position="38"/>
    </location>
</feature>
<name>NLTP2_VITSX</name>
<keyword id="KW-0903">Direct protein sequencing</keyword>
<keyword id="KW-0446">Lipid-binding</keyword>
<keyword id="KW-0964">Secreted</keyword>
<keyword id="KW-0813">Transport</keyword>
<reference key="1">
    <citation type="journal article" date="1993" name="Eur. J. Biochem.">
        <title>Four 9-kDa proteins excreted by somatic embryos of grapevine are isoforms of lipid-transfer proteins.</title>
        <authorList>
            <person name="Coutos-Thevenot P."/>
            <person name="Jouenne T."/>
            <person name="Maes O."/>
            <person name="Guerbette F."/>
            <person name="Grosbois M."/>
            <person name="Le Caer J.-P."/>
            <person name="Boulay M."/>
            <person name="Deloire A."/>
            <person name="Kader J.-C."/>
            <person name="Guern J."/>
        </authorList>
    </citation>
    <scope>PROTEIN SEQUENCE</scope>
    <source>
        <strain>V.vinifera X Berlanchen cv. Rootstock 41B</strain>
    </source>
</reference>
<accession>P33556</accession>
<dbReference type="PIR" id="S39034">
    <property type="entry name" value="S39034"/>
</dbReference>
<dbReference type="SMR" id="P33556"/>
<dbReference type="GO" id="GO:0005576">
    <property type="term" value="C:extracellular region"/>
    <property type="evidence" value="ECO:0007669"/>
    <property type="project" value="UniProtKB-SubCell"/>
</dbReference>
<dbReference type="GO" id="GO:0008289">
    <property type="term" value="F:lipid binding"/>
    <property type="evidence" value="ECO:0007669"/>
    <property type="project" value="UniProtKB-KW"/>
</dbReference>
<dbReference type="GO" id="GO:0006869">
    <property type="term" value="P:lipid transport"/>
    <property type="evidence" value="ECO:0007669"/>
    <property type="project" value="InterPro"/>
</dbReference>
<dbReference type="Gene3D" id="1.10.110.10">
    <property type="entry name" value="Plant lipid-transfer and hydrophobic proteins"/>
    <property type="match status" value="1"/>
</dbReference>
<dbReference type="InterPro" id="IPR036312">
    <property type="entry name" value="Bifun_inhib/LTP/seed_sf"/>
</dbReference>
<dbReference type="InterPro" id="IPR000528">
    <property type="entry name" value="Plant_nsLTP"/>
</dbReference>
<dbReference type="PRINTS" id="PR00382">
    <property type="entry name" value="LIPIDTRNSFER"/>
</dbReference>
<dbReference type="SUPFAM" id="SSF47699">
    <property type="entry name" value="Bifunctional inhibitor/lipid-transfer protein/seed storage 2S albumin"/>
    <property type="match status" value="1"/>
</dbReference>